<evidence type="ECO:0000255" key="1">
    <source>
        <dbReference type="HAMAP-Rule" id="MF_00076"/>
    </source>
</evidence>
<protein>
    <recommendedName>
        <fullName evidence="1">Imidazoleglycerol-phosphate dehydratase</fullName>
        <shortName evidence="1">IGPD</shortName>
        <ecNumber evidence="1">4.2.1.19</ecNumber>
    </recommendedName>
</protein>
<sequence length="210" mass="22590">MTSSALVPSSAELCPDRTAEVSRTTAETRITVRVNLDGTGAASLHTGIGFFDHMLDQIARHGLIDLQIDCDGDLHIDGHHTVEDVGITLGQAFARAVGDKKGIRRYGHAYVPLDEALSRVVVDFSGRPGLHLHIPFTAGSIGGFDTQLTYEFFQGFVNHAGVTLHIDNLKGINAHHQCETVFKAFARALRAALERDPRAAGVIPSTKGSL</sequence>
<name>HIS7_ACIET</name>
<organism>
    <name type="scientific">Acidovorax ebreus (strain TPSY)</name>
    <name type="common">Diaphorobacter sp. (strain TPSY)</name>
    <dbReference type="NCBI Taxonomy" id="535289"/>
    <lineage>
        <taxon>Bacteria</taxon>
        <taxon>Pseudomonadati</taxon>
        <taxon>Pseudomonadota</taxon>
        <taxon>Betaproteobacteria</taxon>
        <taxon>Burkholderiales</taxon>
        <taxon>Comamonadaceae</taxon>
        <taxon>Diaphorobacter</taxon>
    </lineage>
</organism>
<keyword id="KW-0028">Amino-acid biosynthesis</keyword>
<keyword id="KW-0963">Cytoplasm</keyword>
<keyword id="KW-0368">Histidine biosynthesis</keyword>
<keyword id="KW-0456">Lyase</keyword>
<keyword id="KW-1185">Reference proteome</keyword>
<dbReference type="EC" id="4.2.1.19" evidence="1"/>
<dbReference type="EMBL" id="CP001392">
    <property type="protein sequence ID" value="ACM32209.1"/>
    <property type="molecule type" value="Genomic_DNA"/>
</dbReference>
<dbReference type="RefSeq" id="WP_011804212.1">
    <property type="nucleotide sequence ID" value="NC_011992.1"/>
</dbReference>
<dbReference type="SMR" id="B9MDV5"/>
<dbReference type="GeneID" id="84682711"/>
<dbReference type="KEGG" id="dia:Dtpsy_0730"/>
<dbReference type="eggNOG" id="COG0131">
    <property type="taxonomic scope" value="Bacteria"/>
</dbReference>
<dbReference type="HOGENOM" id="CLU_044308_3_0_4"/>
<dbReference type="UniPathway" id="UPA00031">
    <property type="reaction ID" value="UER00011"/>
</dbReference>
<dbReference type="Proteomes" id="UP000000450">
    <property type="component" value="Chromosome"/>
</dbReference>
<dbReference type="GO" id="GO:0005737">
    <property type="term" value="C:cytoplasm"/>
    <property type="evidence" value="ECO:0007669"/>
    <property type="project" value="UniProtKB-SubCell"/>
</dbReference>
<dbReference type="GO" id="GO:0004424">
    <property type="term" value="F:imidazoleglycerol-phosphate dehydratase activity"/>
    <property type="evidence" value="ECO:0007669"/>
    <property type="project" value="UniProtKB-UniRule"/>
</dbReference>
<dbReference type="GO" id="GO:0000105">
    <property type="term" value="P:L-histidine biosynthetic process"/>
    <property type="evidence" value="ECO:0007669"/>
    <property type="project" value="UniProtKB-UniRule"/>
</dbReference>
<dbReference type="CDD" id="cd07914">
    <property type="entry name" value="IGPD"/>
    <property type="match status" value="1"/>
</dbReference>
<dbReference type="FunFam" id="3.30.230.40:FF:000002">
    <property type="entry name" value="Imidazoleglycerol-phosphate dehydratase"/>
    <property type="match status" value="1"/>
</dbReference>
<dbReference type="FunFam" id="3.30.230.40:FF:000003">
    <property type="entry name" value="Imidazoleglycerol-phosphate dehydratase HisB"/>
    <property type="match status" value="1"/>
</dbReference>
<dbReference type="Gene3D" id="3.30.230.40">
    <property type="entry name" value="Imidazole glycerol phosphate dehydratase, domain 1"/>
    <property type="match status" value="2"/>
</dbReference>
<dbReference type="HAMAP" id="MF_00076">
    <property type="entry name" value="HisB"/>
    <property type="match status" value="1"/>
</dbReference>
<dbReference type="InterPro" id="IPR038494">
    <property type="entry name" value="IGPD_sf"/>
</dbReference>
<dbReference type="InterPro" id="IPR000807">
    <property type="entry name" value="ImidazoleglycerolP_deHydtase"/>
</dbReference>
<dbReference type="InterPro" id="IPR020565">
    <property type="entry name" value="ImidazoleglycerP_deHydtase_CS"/>
</dbReference>
<dbReference type="InterPro" id="IPR020568">
    <property type="entry name" value="Ribosomal_Su5_D2-typ_SF"/>
</dbReference>
<dbReference type="NCBIfam" id="NF002106">
    <property type="entry name" value="PRK00951.1-1"/>
    <property type="match status" value="1"/>
</dbReference>
<dbReference type="NCBIfam" id="NF002109">
    <property type="entry name" value="PRK00951.1-5"/>
    <property type="match status" value="1"/>
</dbReference>
<dbReference type="NCBIfam" id="NF002111">
    <property type="entry name" value="PRK00951.2-1"/>
    <property type="match status" value="1"/>
</dbReference>
<dbReference type="NCBIfam" id="NF002114">
    <property type="entry name" value="PRK00951.2-4"/>
    <property type="match status" value="1"/>
</dbReference>
<dbReference type="PANTHER" id="PTHR23133:SF2">
    <property type="entry name" value="IMIDAZOLEGLYCEROL-PHOSPHATE DEHYDRATASE"/>
    <property type="match status" value="1"/>
</dbReference>
<dbReference type="PANTHER" id="PTHR23133">
    <property type="entry name" value="IMIDAZOLEGLYCEROL-PHOSPHATE DEHYDRATASE HIS7"/>
    <property type="match status" value="1"/>
</dbReference>
<dbReference type="Pfam" id="PF00475">
    <property type="entry name" value="IGPD"/>
    <property type="match status" value="1"/>
</dbReference>
<dbReference type="SUPFAM" id="SSF54211">
    <property type="entry name" value="Ribosomal protein S5 domain 2-like"/>
    <property type="match status" value="2"/>
</dbReference>
<dbReference type="PROSITE" id="PS00954">
    <property type="entry name" value="IGP_DEHYDRATASE_1"/>
    <property type="match status" value="1"/>
</dbReference>
<dbReference type="PROSITE" id="PS00955">
    <property type="entry name" value="IGP_DEHYDRATASE_2"/>
    <property type="match status" value="1"/>
</dbReference>
<proteinExistence type="inferred from homology"/>
<reference key="1">
    <citation type="submission" date="2009-01" db="EMBL/GenBank/DDBJ databases">
        <title>Complete sequence of Diaphorobacter sp. TPSY.</title>
        <authorList>
            <consortium name="US DOE Joint Genome Institute"/>
            <person name="Lucas S."/>
            <person name="Copeland A."/>
            <person name="Lapidus A."/>
            <person name="Glavina del Rio T."/>
            <person name="Tice H."/>
            <person name="Bruce D."/>
            <person name="Goodwin L."/>
            <person name="Pitluck S."/>
            <person name="Chertkov O."/>
            <person name="Brettin T."/>
            <person name="Detter J.C."/>
            <person name="Han C."/>
            <person name="Larimer F."/>
            <person name="Land M."/>
            <person name="Hauser L."/>
            <person name="Kyrpides N."/>
            <person name="Mikhailova N."/>
            <person name="Coates J.D."/>
        </authorList>
    </citation>
    <scope>NUCLEOTIDE SEQUENCE [LARGE SCALE GENOMIC DNA]</scope>
    <source>
        <strain>TPSY</strain>
    </source>
</reference>
<gene>
    <name evidence="1" type="primary">hisB</name>
    <name type="ordered locus">Dtpsy_0730</name>
</gene>
<feature type="chain" id="PRO_1000190612" description="Imidazoleglycerol-phosphate dehydratase">
    <location>
        <begin position="1"/>
        <end position="210"/>
    </location>
</feature>
<comment type="catalytic activity">
    <reaction evidence="1">
        <text>D-erythro-1-(imidazol-4-yl)glycerol 3-phosphate = 3-(imidazol-4-yl)-2-oxopropyl phosphate + H2O</text>
        <dbReference type="Rhea" id="RHEA:11040"/>
        <dbReference type="ChEBI" id="CHEBI:15377"/>
        <dbReference type="ChEBI" id="CHEBI:57766"/>
        <dbReference type="ChEBI" id="CHEBI:58278"/>
        <dbReference type="EC" id="4.2.1.19"/>
    </reaction>
</comment>
<comment type="pathway">
    <text evidence="1">Amino-acid biosynthesis; L-histidine biosynthesis; L-histidine from 5-phospho-alpha-D-ribose 1-diphosphate: step 6/9.</text>
</comment>
<comment type="subcellular location">
    <subcellularLocation>
        <location evidence="1">Cytoplasm</location>
    </subcellularLocation>
</comment>
<comment type="similarity">
    <text evidence="1">Belongs to the imidazoleglycerol-phosphate dehydratase family.</text>
</comment>
<accession>B9MDV5</accession>